<name>THIM_CITK8</name>
<keyword id="KW-0067">ATP-binding</keyword>
<keyword id="KW-0418">Kinase</keyword>
<keyword id="KW-0460">Magnesium</keyword>
<keyword id="KW-0479">Metal-binding</keyword>
<keyword id="KW-0547">Nucleotide-binding</keyword>
<keyword id="KW-1185">Reference proteome</keyword>
<keyword id="KW-0784">Thiamine biosynthesis</keyword>
<keyword id="KW-0808">Transferase</keyword>
<reference key="1">
    <citation type="submission" date="2007-08" db="EMBL/GenBank/DDBJ databases">
        <authorList>
            <consortium name="The Citrobacter koseri Genome Sequencing Project"/>
            <person name="McClelland M."/>
            <person name="Sanderson E.K."/>
            <person name="Porwollik S."/>
            <person name="Spieth J."/>
            <person name="Clifton W.S."/>
            <person name="Latreille P."/>
            <person name="Courtney L."/>
            <person name="Wang C."/>
            <person name="Pepin K."/>
            <person name="Bhonagiri V."/>
            <person name="Nash W."/>
            <person name="Johnson M."/>
            <person name="Thiruvilangam P."/>
            <person name="Wilson R."/>
        </authorList>
    </citation>
    <scope>NUCLEOTIDE SEQUENCE [LARGE SCALE GENOMIC DNA]</scope>
    <source>
        <strain>ATCC BAA-895 / CDC 4225-83 / SGSC4696</strain>
    </source>
</reference>
<accession>A8AEC1</accession>
<sequence length="262" mass="27251">MQPDLHSRALAAHTLQQFRILSPLTHCMTNDVVQNFTANTLLASGASPAMVIEPEEARQFAAIASALLINVGTLTRSRAEAMRAATEQAHIAKTPWTLDPVAVGALDYRRRFCLELLSLKPRAIRGNASEILALAGLAAGGRGVDTTDTAVSALPAAQALARQTGAVVAVTGEVDYVTDGQRTVSVTGGDVLMTRVVGTGCALSAVVAASCALPGNTLDNVASACSWMKQAGQSAAERSQGPGSFIPAFLDALYHLNAEEQV</sequence>
<evidence type="ECO:0000255" key="1">
    <source>
        <dbReference type="HAMAP-Rule" id="MF_00228"/>
    </source>
</evidence>
<comment type="function">
    <text evidence="1">Catalyzes the phosphorylation of the hydroxyl group of 4-methyl-5-beta-hydroxyethylthiazole (THZ).</text>
</comment>
<comment type="catalytic activity">
    <reaction evidence="1">
        <text>5-(2-hydroxyethyl)-4-methylthiazole + ATP = 4-methyl-5-(2-phosphooxyethyl)-thiazole + ADP + H(+)</text>
        <dbReference type="Rhea" id="RHEA:24212"/>
        <dbReference type="ChEBI" id="CHEBI:15378"/>
        <dbReference type="ChEBI" id="CHEBI:17957"/>
        <dbReference type="ChEBI" id="CHEBI:30616"/>
        <dbReference type="ChEBI" id="CHEBI:58296"/>
        <dbReference type="ChEBI" id="CHEBI:456216"/>
        <dbReference type="EC" id="2.7.1.50"/>
    </reaction>
</comment>
<comment type="cofactor">
    <cofactor evidence="1">
        <name>Mg(2+)</name>
        <dbReference type="ChEBI" id="CHEBI:18420"/>
    </cofactor>
</comment>
<comment type="pathway">
    <text evidence="1">Cofactor biosynthesis; thiamine diphosphate biosynthesis; 4-methyl-5-(2-phosphoethyl)-thiazole from 5-(2-hydroxyethyl)-4-methylthiazole: step 1/1.</text>
</comment>
<comment type="similarity">
    <text evidence="1">Belongs to the Thz kinase family.</text>
</comment>
<dbReference type="EC" id="2.7.1.50" evidence="1"/>
<dbReference type="EMBL" id="CP000822">
    <property type="protein sequence ID" value="ABV11834.1"/>
    <property type="molecule type" value="Genomic_DNA"/>
</dbReference>
<dbReference type="RefSeq" id="WP_012131658.1">
    <property type="nucleotide sequence ID" value="NC_009792.1"/>
</dbReference>
<dbReference type="SMR" id="A8AEC1"/>
<dbReference type="STRING" id="290338.CKO_00680"/>
<dbReference type="GeneID" id="45134899"/>
<dbReference type="KEGG" id="cko:CKO_00680"/>
<dbReference type="HOGENOM" id="CLU_019943_0_1_6"/>
<dbReference type="OrthoDB" id="8909021at2"/>
<dbReference type="UniPathway" id="UPA00060">
    <property type="reaction ID" value="UER00139"/>
</dbReference>
<dbReference type="Proteomes" id="UP000008148">
    <property type="component" value="Chromosome"/>
</dbReference>
<dbReference type="GO" id="GO:0005524">
    <property type="term" value="F:ATP binding"/>
    <property type="evidence" value="ECO:0007669"/>
    <property type="project" value="UniProtKB-UniRule"/>
</dbReference>
<dbReference type="GO" id="GO:0004417">
    <property type="term" value="F:hydroxyethylthiazole kinase activity"/>
    <property type="evidence" value="ECO:0007669"/>
    <property type="project" value="UniProtKB-UniRule"/>
</dbReference>
<dbReference type="GO" id="GO:0000287">
    <property type="term" value="F:magnesium ion binding"/>
    <property type="evidence" value="ECO:0007669"/>
    <property type="project" value="UniProtKB-UniRule"/>
</dbReference>
<dbReference type="GO" id="GO:0009228">
    <property type="term" value="P:thiamine biosynthetic process"/>
    <property type="evidence" value="ECO:0007669"/>
    <property type="project" value="UniProtKB-KW"/>
</dbReference>
<dbReference type="GO" id="GO:0009229">
    <property type="term" value="P:thiamine diphosphate biosynthetic process"/>
    <property type="evidence" value="ECO:0007669"/>
    <property type="project" value="UniProtKB-UniRule"/>
</dbReference>
<dbReference type="CDD" id="cd01170">
    <property type="entry name" value="THZ_kinase"/>
    <property type="match status" value="1"/>
</dbReference>
<dbReference type="FunFam" id="3.40.1190.20:FF:000015">
    <property type="entry name" value="Hydroxyethylthiazole kinase"/>
    <property type="match status" value="1"/>
</dbReference>
<dbReference type="Gene3D" id="3.40.1190.20">
    <property type="match status" value="1"/>
</dbReference>
<dbReference type="HAMAP" id="MF_00228">
    <property type="entry name" value="Thz_kinase"/>
    <property type="match status" value="1"/>
</dbReference>
<dbReference type="InterPro" id="IPR000417">
    <property type="entry name" value="Hyethyz_kinase"/>
</dbReference>
<dbReference type="InterPro" id="IPR029056">
    <property type="entry name" value="Ribokinase-like"/>
</dbReference>
<dbReference type="NCBIfam" id="NF006830">
    <property type="entry name" value="PRK09355.1"/>
    <property type="match status" value="1"/>
</dbReference>
<dbReference type="NCBIfam" id="TIGR00694">
    <property type="entry name" value="thiM"/>
    <property type="match status" value="1"/>
</dbReference>
<dbReference type="Pfam" id="PF02110">
    <property type="entry name" value="HK"/>
    <property type="match status" value="1"/>
</dbReference>
<dbReference type="PIRSF" id="PIRSF000513">
    <property type="entry name" value="Thz_kinase"/>
    <property type="match status" value="1"/>
</dbReference>
<dbReference type="PRINTS" id="PR01099">
    <property type="entry name" value="HYETHTZKNASE"/>
</dbReference>
<dbReference type="SUPFAM" id="SSF53613">
    <property type="entry name" value="Ribokinase-like"/>
    <property type="match status" value="1"/>
</dbReference>
<gene>
    <name evidence="1" type="primary">thiM</name>
    <name type="ordered locus">CKO_00680</name>
</gene>
<proteinExistence type="inferred from homology"/>
<feature type="chain" id="PRO_1000021504" description="Hydroxyethylthiazole kinase">
    <location>
        <begin position="1"/>
        <end position="262"/>
    </location>
</feature>
<feature type="binding site" evidence="1">
    <location>
        <position position="50"/>
    </location>
    <ligand>
        <name>substrate</name>
    </ligand>
</feature>
<feature type="binding site" evidence="1">
    <location>
        <position position="125"/>
    </location>
    <ligand>
        <name>ATP</name>
        <dbReference type="ChEBI" id="CHEBI:30616"/>
    </ligand>
</feature>
<feature type="binding site" evidence="1">
    <location>
        <position position="171"/>
    </location>
    <ligand>
        <name>ATP</name>
        <dbReference type="ChEBI" id="CHEBI:30616"/>
    </ligand>
</feature>
<feature type="binding site" evidence="1">
    <location>
        <position position="198"/>
    </location>
    <ligand>
        <name>substrate</name>
    </ligand>
</feature>
<organism>
    <name type="scientific">Citrobacter koseri (strain ATCC BAA-895 / CDC 4225-83 / SGSC4696)</name>
    <dbReference type="NCBI Taxonomy" id="290338"/>
    <lineage>
        <taxon>Bacteria</taxon>
        <taxon>Pseudomonadati</taxon>
        <taxon>Pseudomonadota</taxon>
        <taxon>Gammaproteobacteria</taxon>
        <taxon>Enterobacterales</taxon>
        <taxon>Enterobacteriaceae</taxon>
        <taxon>Citrobacter</taxon>
    </lineage>
</organism>
<protein>
    <recommendedName>
        <fullName evidence="1">Hydroxyethylthiazole kinase</fullName>
        <ecNumber evidence="1">2.7.1.50</ecNumber>
    </recommendedName>
    <alternativeName>
        <fullName evidence="1">4-methyl-5-beta-hydroxyethylthiazole kinase</fullName>
        <shortName evidence="1">TH kinase</shortName>
        <shortName evidence="1">Thz kinase</shortName>
    </alternativeName>
</protein>